<gene>
    <name type="primary">Fosl2</name>
    <name type="synonym">Fra-2</name>
    <name type="synonym">Fra2</name>
</gene>
<feature type="chain" id="PRO_0000076485" description="Fos-related antigen 2">
    <location>
        <begin position="1"/>
        <end position="326"/>
    </location>
</feature>
<feature type="domain" description="bZIP" evidence="3">
    <location>
        <begin position="124"/>
        <end position="187"/>
    </location>
</feature>
<feature type="region of interest" description="Disordered" evidence="4">
    <location>
        <begin position="1"/>
        <end position="39"/>
    </location>
</feature>
<feature type="region of interest" description="Disordered" evidence="4">
    <location>
        <begin position="111"/>
        <end position="131"/>
    </location>
</feature>
<feature type="region of interest" description="Basic motif" evidence="3">
    <location>
        <begin position="126"/>
        <end position="128"/>
    </location>
</feature>
<feature type="region of interest" description="Leucine-zipper" evidence="3">
    <location>
        <begin position="129"/>
        <end position="136"/>
    </location>
</feature>
<feature type="region of interest" description="Disordered" evidence="4">
    <location>
        <begin position="193"/>
        <end position="244"/>
    </location>
</feature>
<feature type="region of interest" description="Disordered" evidence="4">
    <location>
        <begin position="289"/>
        <end position="326"/>
    </location>
</feature>
<feature type="compositionally biased region" description="Polar residues" evidence="4">
    <location>
        <begin position="9"/>
        <end position="19"/>
    </location>
</feature>
<feature type="compositionally biased region" description="Polar residues" evidence="4">
    <location>
        <begin position="201"/>
        <end position="211"/>
    </location>
</feature>
<feature type="compositionally biased region" description="Low complexity" evidence="4">
    <location>
        <begin position="308"/>
        <end position="320"/>
    </location>
</feature>
<feature type="modified residue" description="N-acetylmethionine" evidence="1">
    <location>
        <position position="1"/>
    </location>
</feature>
<feature type="modified residue" description="N6-acetyllysine; alternate" evidence="2">
    <location>
        <position position="104"/>
    </location>
</feature>
<feature type="modified residue" description="Phosphoserine" evidence="1">
    <location>
        <position position="120"/>
    </location>
</feature>
<feature type="modified residue" description="Phosphoserine" evidence="9">
    <location>
        <position position="200"/>
    </location>
</feature>
<feature type="modified residue" description="Phosphoserine" evidence="1">
    <location>
        <position position="230"/>
    </location>
</feature>
<feature type="modified residue" description="Phosphoserine" evidence="1">
    <location>
        <position position="308"/>
    </location>
</feature>
<feature type="modified residue" description="Phosphoserine" evidence="1">
    <location>
        <position position="320"/>
    </location>
</feature>
<feature type="cross-link" description="Glycyl lysine isopeptide (Lys-Gly) (interchain with G-Cter in SUMO2)" evidence="1">
    <location>
        <position position="35"/>
    </location>
</feature>
<feature type="cross-link" description="Glycyl lysine isopeptide (Lys-Gly) (interchain with G-Cter in SUMO2); alternate" evidence="1">
    <location>
        <position position="104"/>
    </location>
</feature>
<feature type="cross-link" description="Glycyl lysine isopeptide (Lys-Gly) (interchain with G-Cter in SUMO1); alternate" evidence="1">
    <location>
        <position position="222"/>
    </location>
</feature>
<feature type="cross-link" description="Glycyl lysine isopeptide (Lys-Gly) (interchain with G-Cter in SUMO2); alternate" evidence="1">
    <location>
        <position position="222"/>
    </location>
</feature>
<feature type="cross-link" description="Glycyl lysine isopeptide (Lys-Gly) (interchain with G-Cter in SUMO2)" evidence="1">
    <location>
        <position position="239"/>
    </location>
</feature>
<feature type="sequence conflict" description="In Ref. 1; AAC52310." evidence="8" ref="1">
    <original>T</original>
    <variation>TT</variation>
    <location>
        <position position="56"/>
    </location>
</feature>
<feature type="sequence conflict" description="In Ref. 1; AAC52310." evidence="8" ref="1">
    <original>A</original>
    <variation>R</variation>
    <location>
        <position position="89"/>
    </location>
</feature>
<feature type="sequence conflict" description="In Ref. 1; AAC52310." evidence="8" ref="1">
    <original>A</original>
    <variation>T</variation>
    <location>
        <position position="154"/>
    </location>
</feature>
<feature type="sequence conflict" description="In Ref. 1; AAC52310." evidence="8" ref="1">
    <original>P</original>
    <variation>S</variation>
    <location>
        <position position="201"/>
    </location>
</feature>
<feature type="sequence conflict" description="In Ref. 1; AAC52310." evidence="8" ref="1">
    <original>L</original>
    <variation>V</variation>
    <location>
        <position position="206"/>
    </location>
</feature>
<accession>P51145</accession>
<accession>Q6GXE4</accession>
<keyword id="KW-0007">Acetylation</keyword>
<keyword id="KW-0238">DNA-binding</keyword>
<keyword id="KW-1017">Isopeptide bond</keyword>
<keyword id="KW-0539">Nucleus</keyword>
<keyword id="KW-0597">Phosphoprotein</keyword>
<keyword id="KW-1185">Reference proteome</keyword>
<keyword id="KW-0804">Transcription</keyword>
<keyword id="KW-0805">Transcription regulation</keyword>
<keyword id="KW-0832">Ubl conjugation</keyword>
<sequence length="326" mass="35255">MYQDYPGNFDTSSRGSSGSPAHAESYSSGGGGQQKFRVDMPGSGSAFIPTINAITTSQDLQWMVQPTVITSMSNPYPRSHPYSPLPGLASVPGHMALPRPGVIKTIGTTVGRRRRDEQLSPEEEEKRRIRRERNKLAAAKCRNRRRELTEKLQAETEELEEEKSGLQKEIAELQKEKEKLEFMLVAHGPVCKISPEERRSPPTSGLQSLRGTGSAVGPVVVKQEPPEEDSPSSSAGMDKTQRSVIKPISIAGGGFYGEEPLHTPIVVTSTPAITPGTSNLVFTYPSVLEQESPASPSESCSKAHRRSSSSGDQSSDSLNSPTLLAL</sequence>
<reference key="1">
    <citation type="journal article" date="1995" name="J. Biol. Chem.">
        <title>Circadian expression of transcription factor Fra-2 in the rat pineal gland.</title>
        <authorList>
            <person name="Baler R.D."/>
            <person name="Klein D.C."/>
        </authorList>
    </citation>
    <scope>NUCLEOTIDE SEQUENCE [MRNA]</scope>
    <scope>TISSUE SPECIFICITY</scope>
    <scope>INDUCTION</scope>
    <source>
        <strain>Sprague-Dawley</strain>
        <tissue>Pineal gland</tissue>
    </source>
</reference>
<reference key="2">
    <citation type="journal article" date="2004" name="J. Biol. Chem.">
        <title>Fos-related antigen 2 controls protein kinase A-induced CCAAT/enhancer-binding protein beta expression in osteoblasts.</title>
        <authorList>
            <person name="Chang W."/>
            <person name="Rewari A."/>
            <person name="Centrella M."/>
            <person name="McCarthy T.L."/>
        </authorList>
    </citation>
    <scope>NUCLEOTIDE SEQUENCE [MRNA]</scope>
    <scope>FUNCTION</scope>
    <scope>SUBCELLULAR LOCATION</scope>
    <scope>TISSUE SPECIFICITY</scope>
    <scope>INDUCTION</scope>
    <source>
        <strain>Sprague-Dawley</strain>
        <tissue>Osteoblast</tissue>
    </source>
</reference>
<reference key="3">
    <citation type="journal article" date="2009" name="J. Biol. Chem.">
        <title>Night/day changes in pineal expression of &gt;600 genes: central role of adrenergic/cAMP signaling.</title>
        <authorList>
            <person name="Bailey M.J."/>
            <person name="Coon S.L."/>
            <person name="Carter D.A."/>
            <person name="Humphries A."/>
            <person name="Kim J.S."/>
            <person name="Shi Q."/>
            <person name="Gaildrat P."/>
            <person name="Morin F."/>
            <person name="Ganguly S."/>
            <person name="Hogenesch J.B."/>
            <person name="Weller J.L."/>
            <person name="Rath M.F."/>
            <person name="Moller M."/>
            <person name="Baler R."/>
            <person name="Sugden D."/>
            <person name="Rangel Z.G."/>
            <person name="Munson P.J."/>
            <person name="Klein D.C."/>
        </authorList>
    </citation>
    <scope>TISSUE SPECIFICITY</scope>
    <scope>INDUCTION</scope>
</reference>
<reference key="4">
    <citation type="journal article" date="2012" name="Nat. Commun.">
        <title>Quantitative maps of protein phosphorylation sites across 14 different rat organs and tissues.</title>
        <authorList>
            <person name="Lundby A."/>
            <person name="Secher A."/>
            <person name="Lage K."/>
            <person name="Nordsborg N.B."/>
            <person name="Dmytriyev A."/>
            <person name="Lundby C."/>
            <person name="Olsen J.V."/>
        </authorList>
    </citation>
    <scope>PHOSPHORYLATION [LARGE SCALE ANALYSIS] AT SER-200</scope>
    <scope>IDENTIFICATION BY MASS SPECTROMETRY [LARGE SCALE ANALYSIS]</scope>
</reference>
<proteinExistence type="evidence at protein level"/>
<comment type="function">
    <text evidence="2 5">Controls osteoclast survival and size (By similarity). As a dimer with JUN, activates LIF transcription (By similarity). Activates CEBPB transcription in PGE2-activated osteoblasts (PubMed:15299028).</text>
</comment>
<comment type="subunit">
    <text evidence="2">Heterodimer (By similarity). Interacts with the BAF multiprotein chromatin-remodeling complex subunits SMARCB1 and SMARCD1 (By similarity). Interacts with ARID1A and JUN (By similarity).</text>
</comment>
<comment type="subcellular location">
    <subcellularLocation>
        <location evidence="3 5">Nucleus</location>
    </subcellularLocation>
</comment>
<comment type="tissue specificity">
    <text evidence="5 6 7">Expressed in the brain cortex. Expressed at night in pineal gland (at protein level). Also expressed in osteoblasts (at protein level).</text>
</comment>
<comment type="induction">
    <text evidence="5 6 7">In the pineal gland, exhibits night/day variations with a 4-fold increased expression at night (at protein level). Up-regulation is due to a large degree to the release of norepinephrine from nerve terminals in the pineal gland and cAMP signaling pathway. Nocturnally elevated expression is also observed in the brain cortex. In osteoblasts, up-regulated by PGE2 (at protein level).</text>
</comment>
<comment type="similarity">
    <text evidence="8">Belongs to the bZIP family. Fos subfamily.</text>
</comment>
<evidence type="ECO:0000250" key="1">
    <source>
        <dbReference type="UniProtKB" id="P15408"/>
    </source>
</evidence>
<evidence type="ECO:0000250" key="2">
    <source>
        <dbReference type="UniProtKB" id="P47930"/>
    </source>
</evidence>
<evidence type="ECO:0000255" key="3">
    <source>
        <dbReference type="PROSITE-ProRule" id="PRU00978"/>
    </source>
</evidence>
<evidence type="ECO:0000256" key="4">
    <source>
        <dbReference type="SAM" id="MobiDB-lite"/>
    </source>
</evidence>
<evidence type="ECO:0000269" key="5">
    <source>
    </source>
</evidence>
<evidence type="ECO:0000269" key="6">
    <source>
    </source>
</evidence>
<evidence type="ECO:0000269" key="7">
    <source>
    </source>
</evidence>
<evidence type="ECO:0000305" key="8"/>
<evidence type="ECO:0007744" key="9">
    <source>
    </source>
</evidence>
<protein>
    <recommendedName>
        <fullName>Fos-related antigen 2</fullName>
        <shortName>FRA-2</shortName>
    </recommendedName>
</protein>
<dbReference type="EMBL" id="U18913">
    <property type="protein sequence ID" value="AAC52310.1"/>
    <property type="molecule type" value="mRNA"/>
</dbReference>
<dbReference type="EMBL" id="AY622611">
    <property type="protein sequence ID" value="AAT52165.1"/>
    <property type="molecule type" value="mRNA"/>
</dbReference>
<dbReference type="PIR" id="I55459">
    <property type="entry name" value="I55459"/>
</dbReference>
<dbReference type="RefSeq" id="NP_037086.2">
    <property type="nucleotide sequence ID" value="NM_012954.2"/>
</dbReference>
<dbReference type="SMR" id="P51145"/>
<dbReference type="FunCoup" id="P51145">
    <property type="interactions" value="190"/>
</dbReference>
<dbReference type="GlyGen" id="P51145">
    <property type="glycosylation" value="1 site"/>
</dbReference>
<dbReference type="iPTMnet" id="P51145"/>
<dbReference type="PhosphoSitePlus" id="P51145"/>
<dbReference type="PaxDb" id="10116-ENSRNOP00000064213"/>
<dbReference type="GeneID" id="25446"/>
<dbReference type="KEGG" id="rno:25446"/>
<dbReference type="AGR" id="RGD:2628"/>
<dbReference type="CTD" id="2355"/>
<dbReference type="RGD" id="2628">
    <property type="gene designation" value="Fosl2"/>
</dbReference>
<dbReference type="eggNOG" id="KOG1414">
    <property type="taxonomic scope" value="Eukaryota"/>
</dbReference>
<dbReference type="InParanoid" id="P51145"/>
<dbReference type="PRO" id="PR:P51145"/>
<dbReference type="Proteomes" id="UP000002494">
    <property type="component" value="Unplaced"/>
</dbReference>
<dbReference type="GO" id="GO:0005634">
    <property type="term" value="C:nucleus"/>
    <property type="evidence" value="ECO:0000266"/>
    <property type="project" value="RGD"/>
</dbReference>
<dbReference type="GO" id="GO:0090575">
    <property type="term" value="C:RNA polymerase II transcription regulator complex"/>
    <property type="evidence" value="ECO:0000266"/>
    <property type="project" value="RGD"/>
</dbReference>
<dbReference type="GO" id="GO:0035976">
    <property type="term" value="C:transcription factor AP-1 complex"/>
    <property type="evidence" value="ECO:0000266"/>
    <property type="project" value="RGD"/>
</dbReference>
<dbReference type="GO" id="GO:0003682">
    <property type="term" value="F:chromatin binding"/>
    <property type="evidence" value="ECO:0000266"/>
    <property type="project" value="RGD"/>
</dbReference>
<dbReference type="GO" id="GO:0003677">
    <property type="term" value="F:DNA binding"/>
    <property type="evidence" value="ECO:0000314"/>
    <property type="project" value="RGD"/>
</dbReference>
<dbReference type="GO" id="GO:0001228">
    <property type="term" value="F:DNA-binding transcription activator activity, RNA polymerase II-specific"/>
    <property type="evidence" value="ECO:0000266"/>
    <property type="project" value="RGD"/>
</dbReference>
<dbReference type="GO" id="GO:0003700">
    <property type="term" value="F:DNA-binding transcription factor activity"/>
    <property type="evidence" value="ECO:0000315"/>
    <property type="project" value="RGD"/>
</dbReference>
<dbReference type="GO" id="GO:0000981">
    <property type="term" value="F:DNA-binding transcription factor activity, RNA polymerase II-specific"/>
    <property type="evidence" value="ECO:0000318"/>
    <property type="project" value="GO_Central"/>
</dbReference>
<dbReference type="GO" id="GO:0003690">
    <property type="term" value="F:double-stranded DNA binding"/>
    <property type="evidence" value="ECO:0000314"/>
    <property type="project" value="RGD"/>
</dbReference>
<dbReference type="GO" id="GO:0000978">
    <property type="term" value="F:RNA polymerase II cis-regulatory region sequence-specific DNA binding"/>
    <property type="evidence" value="ECO:0000266"/>
    <property type="project" value="RGD"/>
</dbReference>
<dbReference type="GO" id="GO:0000977">
    <property type="term" value="F:RNA polymerase II transcription regulatory region sequence-specific DNA binding"/>
    <property type="evidence" value="ECO:0000266"/>
    <property type="project" value="RGD"/>
</dbReference>
<dbReference type="GO" id="GO:0043565">
    <property type="term" value="F:sequence-specific DNA binding"/>
    <property type="evidence" value="ECO:0000314"/>
    <property type="project" value="RGD"/>
</dbReference>
<dbReference type="GO" id="GO:0000976">
    <property type="term" value="F:transcription cis-regulatory region binding"/>
    <property type="evidence" value="ECO:0000314"/>
    <property type="project" value="RGD"/>
</dbReference>
<dbReference type="GO" id="GO:0061144">
    <property type="term" value="P:alveolar secondary septum development"/>
    <property type="evidence" value="ECO:0000266"/>
    <property type="project" value="RGD"/>
</dbReference>
<dbReference type="GO" id="GO:0030183">
    <property type="term" value="P:B cell differentiation"/>
    <property type="evidence" value="ECO:0000266"/>
    <property type="project" value="RGD"/>
</dbReference>
<dbReference type="GO" id="GO:0042100">
    <property type="term" value="P:B cell proliferation"/>
    <property type="evidence" value="ECO:0000266"/>
    <property type="project" value="RGD"/>
</dbReference>
<dbReference type="GO" id="GO:0060348">
    <property type="term" value="P:bone development"/>
    <property type="evidence" value="ECO:0000266"/>
    <property type="project" value="RGD"/>
</dbReference>
<dbReference type="GO" id="GO:0030282">
    <property type="term" value="P:bone mineralization"/>
    <property type="evidence" value="ECO:0000266"/>
    <property type="project" value="RGD"/>
</dbReference>
<dbReference type="GO" id="GO:0051216">
    <property type="term" value="P:cartilage development"/>
    <property type="evidence" value="ECO:0000266"/>
    <property type="project" value="RGD"/>
</dbReference>
<dbReference type="GO" id="GO:0000902">
    <property type="term" value="P:cell morphogenesis"/>
    <property type="evidence" value="ECO:0000266"/>
    <property type="project" value="RGD"/>
</dbReference>
<dbReference type="GO" id="GO:0002062">
    <property type="term" value="P:chondrocyte differentiation"/>
    <property type="evidence" value="ECO:0000266"/>
    <property type="project" value="RGD"/>
</dbReference>
<dbReference type="GO" id="GO:0035988">
    <property type="term" value="P:chondrocyte proliferation"/>
    <property type="evidence" value="ECO:0000266"/>
    <property type="project" value="RGD"/>
</dbReference>
<dbReference type="GO" id="GO:0007623">
    <property type="term" value="P:circadian rhythm"/>
    <property type="evidence" value="ECO:0000270"/>
    <property type="project" value="RGD"/>
</dbReference>
<dbReference type="GO" id="GO:0032964">
    <property type="term" value="P:collagen biosynthetic process"/>
    <property type="evidence" value="ECO:0000266"/>
    <property type="project" value="RGD"/>
</dbReference>
<dbReference type="GO" id="GO:0032963">
    <property type="term" value="P:collagen metabolic process"/>
    <property type="evidence" value="ECO:0000266"/>
    <property type="project" value="RGD"/>
</dbReference>
<dbReference type="GO" id="GO:0001661">
    <property type="term" value="P:conditioned taste aversion"/>
    <property type="evidence" value="ECO:0000270"/>
    <property type="project" value="RGD"/>
</dbReference>
<dbReference type="GO" id="GO:1904606">
    <property type="term" value="P:fat cell apoptotic process"/>
    <property type="evidence" value="ECO:0000266"/>
    <property type="project" value="RGD"/>
</dbReference>
<dbReference type="GO" id="GO:0045444">
    <property type="term" value="P:fat cell differentiation"/>
    <property type="evidence" value="ECO:0000266"/>
    <property type="project" value="RGD"/>
</dbReference>
<dbReference type="GO" id="GO:0060613">
    <property type="term" value="P:fat pad development"/>
    <property type="evidence" value="ECO:0000266"/>
    <property type="project" value="RGD"/>
</dbReference>
<dbReference type="GO" id="GO:0007565">
    <property type="term" value="P:female pregnancy"/>
    <property type="evidence" value="ECO:0000270"/>
    <property type="project" value="RGD"/>
</dbReference>
<dbReference type="GO" id="GO:0010467">
    <property type="term" value="P:gene expression"/>
    <property type="evidence" value="ECO:0000266"/>
    <property type="project" value="RGD"/>
</dbReference>
<dbReference type="GO" id="GO:0042593">
    <property type="term" value="P:glucose homeostasis"/>
    <property type="evidence" value="ECO:0000266"/>
    <property type="project" value="RGD"/>
</dbReference>
<dbReference type="GO" id="GO:0003417">
    <property type="term" value="P:growth plate cartilage development"/>
    <property type="evidence" value="ECO:0000266"/>
    <property type="project" value="RGD"/>
</dbReference>
<dbReference type="GO" id="GO:0048872">
    <property type="term" value="P:homeostasis of number of cells"/>
    <property type="evidence" value="ECO:0000266"/>
    <property type="project" value="RGD"/>
</dbReference>
<dbReference type="GO" id="GO:0048873">
    <property type="term" value="P:homeostasis of number of cells within a tissue"/>
    <property type="evidence" value="ECO:0000266"/>
    <property type="project" value="RGD"/>
</dbReference>
<dbReference type="GO" id="GO:0006954">
    <property type="term" value="P:inflammatory response"/>
    <property type="evidence" value="ECO:0000266"/>
    <property type="project" value="RGD"/>
</dbReference>
<dbReference type="GO" id="GO:0002437">
    <property type="term" value="P:inflammatory response to antigenic stimulus"/>
    <property type="evidence" value="ECO:0000266"/>
    <property type="project" value="RGD"/>
</dbReference>
<dbReference type="GO" id="GO:0045087">
    <property type="term" value="P:innate immune response"/>
    <property type="evidence" value="ECO:0000266"/>
    <property type="project" value="RGD"/>
</dbReference>
<dbReference type="GO" id="GO:1901142">
    <property type="term" value="P:insulin metabolic process"/>
    <property type="evidence" value="ECO:0000266"/>
    <property type="project" value="RGD"/>
</dbReference>
<dbReference type="GO" id="GO:0003334">
    <property type="term" value="P:keratinocyte development"/>
    <property type="evidence" value="ECO:0000266"/>
    <property type="project" value="RGD"/>
</dbReference>
<dbReference type="GO" id="GO:0048286">
    <property type="term" value="P:lung alveolus development"/>
    <property type="evidence" value="ECO:0000266"/>
    <property type="project" value="RGD"/>
</dbReference>
<dbReference type="GO" id="GO:0060427">
    <property type="term" value="P:lung connective tissue development"/>
    <property type="evidence" value="ECO:0000266"/>
    <property type="project" value="RGD"/>
</dbReference>
<dbReference type="GO" id="GO:0030324">
    <property type="term" value="P:lung development"/>
    <property type="evidence" value="ECO:0000266"/>
    <property type="project" value="RGD"/>
</dbReference>
<dbReference type="GO" id="GO:0030225">
    <property type="term" value="P:macrophage differentiation"/>
    <property type="evidence" value="ECO:0000266"/>
    <property type="project" value="RGD"/>
</dbReference>
<dbReference type="GO" id="GO:0070254">
    <property type="term" value="P:mucus secretion"/>
    <property type="evidence" value="ECO:0000266"/>
    <property type="project" value="RGD"/>
</dbReference>
<dbReference type="GO" id="GO:0035264">
    <property type="term" value="P:multicellular organism growth"/>
    <property type="evidence" value="ECO:0000266"/>
    <property type="project" value="RGD"/>
</dbReference>
<dbReference type="GO" id="GO:0036446">
    <property type="term" value="P:myofibroblast differentiation"/>
    <property type="evidence" value="ECO:0000266"/>
    <property type="project" value="RGD"/>
</dbReference>
<dbReference type="GO" id="GO:0030223">
    <property type="term" value="P:neutrophil differentiation"/>
    <property type="evidence" value="ECO:0000266"/>
    <property type="project" value="RGD"/>
</dbReference>
<dbReference type="GO" id="GO:0001865">
    <property type="term" value="P:NK T cell differentiation"/>
    <property type="evidence" value="ECO:0000266"/>
    <property type="project" value="RGD"/>
</dbReference>
<dbReference type="GO" id="GO:0001503">
    <property type="term" value="P:ossification"/>
    <property type="evidence" value="ECO:0000266"/>
    <property type="project" value="RGD"/>
</dbReference>
<dbReference type="GO" id="GO:0001649">
    <property type="term" value="P:osteoblast differentiation"/>
    <property type="evidence" value="ECO:0000266"/>
    <property type="project" value="RGD"/>
</dbReference>
<dbReference type="GO" id="GO:0030316">
    <property type="term" value="P:osteoclast differentiation"/>
    <property type="evidence" value="ECO:0000266"/>
    <property type="project" value="RGD"/>
</dbReference>
<dbReference type="GO" id="GO:0009648">
    <property type="term" value="P:photoperiodism"/>
    <property type="evidence" value="ECO:0000270"/>
    <property type="project" value="RGD"/>
</dbReference>
<dbReference type="GO" id="GO:0045893">
    <property type="term" value="P:positive regulation of DNA-templated transcription"/>
    <property type="evidence" value="ECO:0000314"/>
    <property type="project" value="RGD"/>
</dbReference>
<dbReference type="GO" id="GO:0048146">
    <property type="term" value="P:positive regulation of fibroblast proliferation"/>
    <property type="evidence" value="ECO:0000266"/>
    <property type="project" value="RGD"/>
</dbReference>
<dbReference type="GO" id="GO:0045944">
    <property type="term" value="P:positive regulation of transcription by RNA polymerase II"/>
    <property type="evidence" value="ECO:0000266"/>
    <property type="project" value="RGD"/>
</dbReference>
<dbReference type="GO" id="GO:0040014">
    <property type="term" value="P:regulation of multicellular organism growth"/>
    <property type="evidence" value="ECO:0000266"/>
    <property type="project" value="RGD"/>
</dbReference>
<dbReference type="GO" id="GO:1904760">
    <property type="term" value="P:regulation of myofibroblast differentiation"/>
    <property type="evidence" value="ECO:0000266"/>
    <property type="project" value="RGD"/>
</dbReference>
<dbReference type="GO" id="GO:0006357">
    <property type="term" value="P:regulation of transcription by RNA polymerase II"/>
    <property type="evidence" value="ECO:0000266"/>
    <property type="project" value="RGD"/>
</dbReference>
<dbReference type="GO" id="GO:1904975">
    <property type="term" value="P:response to bleomycin"/>
    <property type="evidence" value="ECO:0000266"/>
    <property type="project" value="RGD"/>
</dbReference>
<dbReference type="GO" id="GO:0051591">
    <property type="term" value="P:response to cAMP"/>
    <property type="evidence" value="ECO:0000270"/>
    <property type="project" value="RGD"/>
</dbReference>
<dbReference type="GO" id="GO:0034097">
    <property type="term" value="P:response to cytokine"/>
    <property type="evidence" value="ECO:0000270"/>
    <property type="project" value="RGD"/>
</dbReference>
<dbReference type="GO" id="GO:0032355">
    <property type="term" value="P:response to estradiol"/>
    <property type="evidence" value="ECO:0000315"/>
    <property type="project" value="RGD"/>
</dbReference>
<dbReference type="GO" id="GO:1904321">
    <property type="term" value="P:response to forskolin"/>
    <property type="evidence" value="ECO:0000270"/>
    <property type="project" value="RGD"/>
</dbReference>
<dbReference type="GO" id="GO:0051384">
    <property type="term" value="P:response to glucocorticoid"/>
    <property type="evidence" value="ECO:0000266"/>
    <property type="project" value="RGD"/>
</dbReference>
<dbReference type="GO" id="GO:0140459">
    <property type="term" value="P:response to Gram-positive bacterium"/>
    <property type="evidence" value="ECO:0000266"/>
    <property type="project" value="RGD"/>
</dbReference>
<dbReference type="GO" id="GO:0001666">
    <property type="term" value="P:response to hypoxia"/>
    <property type="evidence" value="ECO:0000315"/>
    <property type="project" value="RGD"/>
</dbReference>
<dbReference type="GO" id="GO:0035902">
    <property type="term" value="P:response to immobilization stress"/>
    <property type="evidence" value="ECO:0000270"/>
    <property type="project" value="RGD"/>
</dbReference>
<dbReference type="GO" id="GO:0035962">
    <property type="term" value="P:response to interleukin-13"/>
    <property type="evidence" value="ECO:0000266"/>
    <property type="project" value="RGD"/>
</dbReference>
<dbReference type="GO" id="GO:0098760">
    <property type="term" value="P:response to interleukin-7"/>
    <property type="evidence" value="ECO:0000266"/>
    <property type="project" value="RGD"/>
</dbReference>
<dbReference type="GO" id="GO:1990823">
    <property type="term" value="P:response to leukemia inhibitory factor"/>
    <property type="evidence" value="ECO:0000266"/>
    <property type="project" value="RGD"/>
</dbReference>
<dbReference type="GO" id="GO:0009416">
    <property type="term" value="P:response to light stimulus"/>
    <property type="evidence" value="ECO:0000270"/>
    <property type="project" value="RGD"/>
</dbReference>
<dbReference type="GO" id="GO:0032496">
    <property type="term" value="P:response to lipopolysaccharide"/>
    <property type="evidence" value="ECO:0000266"/>
    <property type="project" value="RGD"/>
</dbReference>
<dbReference type="GO" id="GO:0009612">
    <property type="term" value="P:response to mechanical stimulus"/>
    <property type="evidence" value="ECO:0000270"/>
    <property type="project" value="RGD"/>
</dbReference>
<dbReference type="GO" id="GO:0043434">
    <property type="term" value="P:response to peptide hormone"/>
    <property type="evidence" value="ECO:0000270"/>
    <property type="project" value="RGD"/>
</dbReference>
<dbReference type="GO" id="GO:0032570">
    <property type="term" value="P:response to progesterone"/>
    <property type="evidence" value="ECO:0000270"/>
    <property type="project" value="RGD"/>
</dbReference>
<dbReference type="GO" id="GO:0009636">
    <property type="term" value="P:response to toxic substance"/>
    <property type="evidence" value="ECO:0000270"/>
    <property type="project" value="RGD"/>
</dbReference>
<dbReference type="GO" id="GO:0009410">
    <property type="term" value="P:response to xenobiotic stimulus"/>
    <property type="evidence" value="ECO:0000266"/>
    <property type="project" value="RGD"/>
</dbReference>
<dbReference type="GO" id="GO:0048745">
    <property type="term" value="P:smooth muscle tissue development"/>
    <property type="evidence" value="ECO:0000266"/>
    <property type="project" value="RGD"/>
</dbReference>
<dbReference type="GO" id="GO:0030217">
    <property type="term" value="P:T cell differentiation"/>
    <property type="evidence" value="ECO:0000266"/>
    <property type="project" value="RGD"/>
</dbReference>
<dbReference type="GO" id="GO:0050852">
    <property type="term" value="P:T cell receptor signaling pathway"/>
    <property type="evidence" value="ECO:0000266"/>
    <property type="project" value="RGD"/>
</dbReference>
<dbReference type="GO" id="GO:0048771">
    <property type="term" value="P:tissue remodeling"/>
    <property type="evidence" value="ECO:0000266"/>
    <property type="project" value="RGD"/>
</dbReference>
<dbReference type="GO" id="GO:0006366">
    <property type="term" value="P:transcription by RNA polymerase II"/>
    <property type="evidence" value="ECO:0000315"/>
    <property type="project" value="RGD"/>
</dbReference>
<dbReference type="CDD" id="cd14721">
    <property type="entry name" value="bZIP_Fos"/>
    <property type="match status" value="1"/>
</dbReference>
<dbReference type="FunFam" id="1.20.5.170:FF:000006">
    <property type="entry name" value="fos-related antigen 2 isoform X1"/>
    <property type="match status" value="1"/>
</dbReference>
<dbReference type="Gene3D" id="1.20.5.170">
    <property type="match status" value="1"/>
</dbReference>
<dbReference type="InterPro" id="IPR000837">
    <property type="entry name" value="AP-1"/>
</dbReference>
<dbReference type="InterPro" id="IPR004827">
    <property type="entry name" value="bZIP"/>
</dbReference>
<dbReference type="InterPro" id="IPR046347">
    <property type="entry name" value="bZIP_sf"/>
</dbReference>
<dbReference type="PANTHER" id="PTHR23351">
    <property type="entry name" value="FOS TRANSCRIPTION FACTOR-RELATED"/>
    <property type="match status" value="1"/>
</dbReference>
<dbReference type="PANTHER" id="PTHR23351:SF25">
    <property type="entry name" value="FOS-RELATED ANTIGEN 2"/>
    <property type="match status" value="1"/>
</dbReference>
<dbReference type="Pfam" id="PF00170">
    <property type="entry name" value="bZIP_1"/>
    <property type="match status" value="1"/>
</dbReference>
<dbReference type="PRINTS" id="PR00042">
    <property type="entry name" value="LEUZIPPRFOS"/>
</dbReference>
<dbReference type="SMART" id="SM00338">
    <property type="entry name" value="BRLZ"/>
    <property type="match status" value="1"/>
</dbReference>
<dbReference type="SUPFAM" id="SSF57959">
    <property type="entry name" value="Leucine zipper domain"/>
    <property type="match status" value="1"/>
</dbReference>
<dbReference type="PROSITE" id="PS50217">
    <property type="entry name" value="BZIP"/>
    <property type="match status" value="1"/>
</dbReference>
<dbReference type="PROSITE" id="PS00036">
    <property type="entry name" value="BZIP_BASIC"/>
    <property type="match status" value="1"/>
</dbReference>
<name>FOSL2_RAT</name>
<organism>
    <name type="scientific">Rattus norvegicus</name>
    <name type="common">Rat</name>
    <dbReference type="NCBI Taxonomy" id="10116"/>
    <lineage>
        <taxon>Eukaryota</taxon>
        <taxon>Metazoa</taxon>
        <taxon>Chordata</taxon>
        <taxon>Craniata</taxon>
        <taxon>Vertebrata</taxon>
        <taxon>Euteleostomi</taxon>
        <taxon>Mammalia</taxon>
        <taxon>Eutheria</taxon>
        <taxon>Euarchontoglires</taxon>
        <taxon>Glires</taxon>
        <taxon>Rodentia</taxon>
        <taxon>Myomorpha</taxon>
        <taxon>Muroidea</taxon>
        <taxon>Muridae</taxon>
        <taxon>Murinae</taxon>
        <taxon>Rattus</taxon>
    </lineage>
</organism>